<dbReference type="EC" id="2.7.1.23" evidence="1"/>
<dbReference type="EMBL" id="AL939105">
    <property type="protein sequence ID" value="CAB59707.1"/>
    <property type="status" value="ALT_INIT"/>
    <property type="molecule type" value="Genomic_DNA"/>
</dbReference>
<dbReference type="RefSeq" id="NP_624731.1">
    <property type="nucleotide sequence ID" value="NC_003888.3"/>
</dbReference>
<dbReference type="RefSeq" id="WP_037667537.1">
    <property type="nucleotide sequence ID" value="NZ_VNID01000015.1"/>
</dbReference>
<dbReference type="SMR" id="Q9RJS6"/>
<dbReference type="STRING" id="100226.gene:17757993"/>
<dbReference type="PaxDb" id="100226-SCO0410"/>
<dbReference type="KEGG" id="sco:SCO0410"/>
<dbReference type="PATRIC" id="fig|100226.15.peg.386"/>
<dbReference type="eggNOG" id="COG0061">
    <property type="taxonomic scope" value="Bacteria"/>
</dbReference>
<dbReference type="HOGENOM" id="CLU_008831_0_0_11"/>
<dbReference type="InParanoid" id="Q9RJS6"/>
<dbReference type="OrthoDB" id="9774737at2"/>
<dbReference type="PhylomeDB" id="Q9RJS6"/>
<dbReference type="Proteomes" id="UP000001973">
    <property type="component" value="Chromosome"/>
</dbReference>
<dbReference type="GO" id="GO:0005737">
    <property type="term" value="C:cytoplasm"/>
    <property type="evidence" value="ECO:0007669"/>
    <property type="project" value="UniProtKB-SubCell"/>
</dbReference>
<dbReference type="GO" id="GO:0005524">
    <property type="term" value="F:ATP binding"/>
    <property type="evidence" value="ECO:0007669"/>
    <property type="project" value="UniProtKB-KW"/>
</dbReference>
<dbReference type="GO" id="GO:0046872">
    <property type="term" value="F:metal ion binding"/>
    <property type="evidence" value="ECO:0007669"/>
    <property type="project" value="UniProtKB-UniRule"/>
</dbReference>
<dbReference type="GO" id="GO:0051287">
    <property type="term" value="F:NAD binding"/>
    <property type="evidence" value="ECO:0007669"/>
    <property type="project" value="UniProtKB-ARBA"/>
</dbReference>
<dbReference type="GO" id="GO:0003951">
    <property type="term" value="F:NAD+ kinase activity"/>
    <property type="evidence" value="ECO:0000318"/>
    <property type="project" value="GO_Central"/>
</dbReference>
<dbReference type="GO" id="GO:0019674">
    <property type="term" value="P:NAD metabolic process"/>
    <property type="evidence" value="ECO:0007669"/>
    <property type="project" value="InterPro"/>
</dbReference>
<dbReference type="GO" id="GO:0006741">
    <property type="term" value="P:NADP biosynthetic process"/>
    <property type="evidence" value="ECO:0000318"/>
    <property type="project" value="GO_Central"/>
</dbReference>
<dbReference type="FunFam" id="2.60.200.30:FF:000007">
    <property type="entry name" value="NAD kinase"/>
    <property type="match status" value="1"/>
</dbReference>
<dbReference type="FunFam" id="3.40.50.10330:FF:000053">
    <property type="entry name" value="NAD kinase 1"/>
    <property type="match status" value="1"/>
</dbReference>
<dbReference type="Gene3D" id="3.40.50.10330">
    <property type="entry name" value="Probable inorganic polyphosphate/atp-NAD kinase, domain 1"/>
    <property type="match status" value="1"/>
</dbReference>
<dbReference type="Gene3D" id="2.60.200.30">
    <property type="entry name" value="Probable inorganic polyphosphate/atp-NAD kinase, domain 2"/>
    <property type="match status" value="1"/>
</dbReference>
<dbReference type="HAMAP" id="MF_00361">
    <property type="entry name" value="NAD_kinase"/>
    <property type="match status" value="1"/>
</dbReference>
<dbReference type="InterPro" id="IPR017438">
    <property type="entry name" value="ATP-NAD_kinase_N"/>
</dbReference>
<dbReference type="InterPro" id="IPR017437">
    <property type="entry name" value="ATP-NAD_kinase_PpnK-typ_C"/>
</dbReference>
<dbReference type="InterPro" id="IPR016064">
    <property type="entry name" value="NAD/diacylglycerol_kinase_sf"/>
</dbReference>
<dbReference type="InterPro" id="IPR002504">
    <property type="entry name" value="NADK"/>
</dbReference>
<dbReference type="PANTHER" id="PTHR20275">
    <property type="entry name" value="NAD KINASE"/>
    <property type="match status" value="1"/>
</dbReference>
<dbReference type="PANTHER" id="PTHR20275:SF0">
    <property type="entry name" value="NAD KINASE"/>
    <property type="match status" value="1"/>
</dbReference>
<dbReference type="Pfam" id="PF01513">
    <property type="entry name" value="NAD_kinase"/>
    <property type="match status" value="1"/>
</dbReference>
<dbReference type="Pfam" id="PF20143">
    <property type="entry name" value="NAD_kinase_C"/>
    <property type="match status" value="1"/>
</dbReference>
<dbReference type="SUPFAM" id="SSF111331">
    <property type="entry name" value="NAD kinase/diacylglycerol kinase-like"/>
    <property type="match status" value="1"/>
</dbReference>
<sequence>MTIERVGLVVHGGREGAAEAAREVREWCDENAVACTDIDVWSDTGRHSAREEVDAAGDPDLVVTLGGDGTFLRGARLAAENDALILGVDLGRVGFLTEVPAPAVRSALDAVRDGGLEPESRMLLTLRASRLLEIPAEMEALLRYGRGPLLPPPRVRTDCESGDEWGIALNVTALNDVVLEKLSRDRQISVGVYIAGRLLASYSADALLVATPTGSTAYSFAAGGPVVSPRAEALVFTAVAPHMTFDRSVVTAPDEPVGLRILERSGRAAVSIDGQLRGVLDPGDWLGVYAAPRRLRAVRLGPMDFYGRLRERMRLTDAPAAVADGTPAPLWPVSTPPPGDLAHLALPVPGAEGASGDLLREQS</sequence>
<accession>Q9RJS6</accession>
<proteinExistence type="inferred from homology"/>
<protein>
    <recommendedName>
        <fullName evidence="1">NAD kinase 1</fullName>
        <ecNumber evidence="1">2.7.1.23</ecNumber>
    </recommendedName>
    <alternativeName>
        <fullName evidence="1">ATP-dependent NAD kinase 1</fullName>
    </alternativeName>
</protein>
<name>NADK1_STRCO</name>
<organism>
    <name type="scientific">Streptomyces coelicolor (strain ATCC BAA-471 / A3(2) / M145)</name>
    <dbReference type="NCBI Taxonomy" id="100226"/>
    <lineage>
        <taxon>Bacteria</taxon>
        <taxon>Bacillati</taxon>
        <taxon>Actinomycetota</taxon>
        <taxon>Actinomycetes</taxon>
        <taxon>Kitasatosporales</taxon>
        <taxon>Streptomycetaceae</taxon>
        <taxon>Streptomyces</taxon>
        <taxon>Streptomyces albidoflavus group</taxon>
    </lineage>
</organism>
<feature type="chain" id="PRO_0000229699" description="NAD kinase 1">
    <location>
        <begin position="1"/>
        <end position="363"/>
    </location>
</feature>
<feature type="active site" description="Proton acceptor" evidence="1">
    <location>
        <position position="68"/>
    </location>
</feature>
<feature type="binding site" evidence="1">
    <location>
        <begin position="68"/>
        <end position="69"/>
    </location>
    <ligand>
        <name>NAD(+)</name>
        <dbReference type="ChEBI" id="CHEBI:57540"/>
    </ligand>
</feature>
<feature type="binding site" evidence="1">
    <location>
        <position position="73"/>
    </location>
    <ligand>
        <name>NAD(+)</name>
        <dbReference type="ChEBI" id="CHEBI:57540"/>
    </ligand>
</feature>
<feature type="binding site" evidence="1">
    <location>
        <begin position="175"/>
        <end position="176"/>
    </location>
    <ligand>
        <name>NAD(+)</name>
        <dbReference type="ChEBI" id="CHEBI:57540"/>
    </ligand>
</feature>
<feature type="binding site" evidence="1">
    <location>
        <position position="186"/>
    </location>
    <ligand>
        <name>NAD(+)</name>
        <dbReference type="ChEBI" id="CHEBI:57540"/>
    </ligand>
</feature>
<feature type="binding site" evidence="1">
    <location>
        <position position="205"/>
    </location>
    <ligand>
        <name>NAD(+)</name>
        <dbReference type="ChEBI" id="CHEBI:57540"/>
    </ligand>
</feature>
<feature type="binding site" evidence="1">
    <location>
        <position position="240"/>
    </location>
    <ligand>
        <name>NAD(+)</name>
        <dbReference type="ChEBI" id="CHEBI:57540"/>
    </ligand>
</feature>
<feature type="binding site" evidence="1">
    <location>
        <position position="275"/>
    </location>
    <ligand>
        <name>NAD(+)</name>
        <dbReference type="ChEBI" id="CHEBI:57540"/>
    </ligand>
</feature>
<keyword id="KW-0067">ATP-binding</keyword>
<keyword id="KW-0963">Cytoplasm</keyword>
<keyword id="KW-0418">Kinase</keyword>
<keyword id="KW-0520">NAD</keyword>
<keyword id="KW-0521">NADP</keyword>
<keyword id="KW-0547">Nucleotide-binding</keyword>
<keyword id="KW-1185">Reference proteome</keyword>
<keyword id="KW-0808">Transferase</keyword>
<comment type="function">
    <text evidence="1">Involved in the regulation of the intracellular balance of NAD and NADP, and is a key enzyme in the biosynthesis of NADP. Catalyzes specifically the phosphorylation on 2'-hydroxyl of the adenosine moiety of NAD to yield NADP.</text>
</comment>
<comment type="catalytic activity">
    <reaction evidence="1">
        <text>NAD(+) + ATP = ADP + NADP(+) + H(+)</text>
        <dbReference type="Rhea" id="RHEA:18629"/>
        <dbReference type="ChEBI" id="CHEBI:15378"/>
        <dbReference type="ChEBI" id="CHEBI:30616"/>
        <dbReference type="ChEBI" id="CHEBI:57540"/>
        <dbReference type="ChEBI" id="CHEBI:58349"/>
        <dbReference type="ChEBI" id="CHEBI:456216"/>
        <dbReference type="EC" id="2.7.1.23"/>
    </reaction>
</comment>
<comment type="cofactor">
    <cofactor evidence="1">
        <name>a divalent metal cation</name>
        <dbReference type="ChEBI" id="CHEBI:60240"/>
    </cofactor>
</comment>
<comment type="subcellular location">
    <subcellularLocation>
        <location evidence="1">Cytoplasm</location>
    </subcellularLocation>
</comment>
<comment type="similarity">
    <text evidence="1">Belongs to the NAD kinase family.</text>
</comment>
<comment type="sequence caution" evidence="2">
    <conflict type="erroneous initiation">
        <sequence resource="EMBL-CDS" id="CAB59707"/>
    </conflict>
    <text>Extended N-terminus.</text>
</comment>
<evidence type="ECO:0000255" key="1">
    <source>
        <dbReference type="HAMAP-Rule" id="MF_00361"/>
    </source>
</evidence>
<evidence type="ECO:0000305" key="2"/>
<reference key="1">
    <citation type="journal article" date="2002" name="Nature">
        <title>Complete genome sequence of the model actinomycete Streptomyces coelicolor A3(2).</title>
        <authorList>
            <person name="Bentley S.D."/>
            <person name="Chater K.F."/>
            <person name="Cerdeno-Tarraga A.-M."/>
            <person name="Challis G.L."/>
            <person name="Thomson N.R."/>
            <person name="James K.D."/>
            <person name="Harris D.E."/>
            <person name="Quail M.A."/>
            <person name="Kieser H."/>
            <person name="Harper D."/>
            <person name="Bateman A."/>
            <person name="Brown S."/>
            <person name="Chandra G."/>
            <person name="Chen C.W."/>
            <person name="Collins M."/>
            <person name="Cronin A."/>
            <person name="Fraser A."/>
            <person name="Goble A."/>
            <person name="Hidalgo J."/>
            <person name="Hornsby T."/>
            <person name="Howarth S."/>
            <person name="Huang C.-H."/>
            <person name="Kieser T."/>
            <person name="Larke L."/>
            <person name="Murphy L.D."/>
            <person name="Oliver K."/>
            <person name="O'Neil S."/>
            <person name="Rabbinowitsch E."/>
            <person name="Rajandream M.A."/>
            <person name="Rutherford K.M."/>
            <person name="Rutter S."/>
            <person name="Seeger K."/>
            <person name="Saunders D."/>
            <person name="Sharp S."/>
            <person name="Squares R."/>
            <person name="Squares S."/>
            <person name="Taylor K."/>
            <person name="Warren T."/>
            <person name="Wietzorrek A."/>
            <person name="Woodward J.R."/>
            <person name="Barrell B.G."/>
            <person name="Parkhill J."/>
            <person name="Hopwood D.A."/>
        </authorList>
    </citation>
    <scope>NUCLEOTIDE SEQUENCE [LARGE SCALE GENOMIC DNA]</scope>
    <source>
        <strain>ATCC BAA-471 / A3(2) / M145</strain>
    </source>
</reference>
<gene>
    <name evidence="1" type="primary">nadK1</name>
    <name type="ordered locus">SCO0410</name>
    <name type="ORF">SCF51.09c</name>
</gene>